<gene>
    <name type="primary">Ndufs4</name>
</gene>
<keyword id="KW-0002">3D-structure</keyword>
<keyword id="KW-0903">Direct protein sequencing</keyword>
<keyword id="KW-0249">Electron transport</keyword>
<keyword id="KW-0472">Membrane</keyword>
<keyword id="KW-0496">Mitochondrion</keyword>
<keyword id="KW-0999">Mitochondrion inner membrane</keyword>
<keyword id="KW-0597">Phosphoprotein</keyword>
<keyword id="KW-1185">Reference proteome</keyword>
<keyword id="KW-0679">Respiratory chain</keyword>
<keyword id="KW-0809">Transit peptide</keyword>
<keyword id="KW-0813">Transport</keyword>
<name>NDUS4_MOUSE</name>
<comment type="function">
    <text evidence="7">Accessory subunit of the mitochondrial membrane respiratory chain NADH dehydrogenase (Complex I), that is believed not to be involved in catalysis. Complex I functions in the transfer of electrons from NADH to the respiratory chain. The immediate electron acceptor for the enzyme is believed to be ubiquinone.</text>
</comment>
<comment type="subunit">
    <text evidence="2 7">This is a component of the iron-sulfur (IP) fragment of the enzyme (PubMed:38575788). Interacts with BCAP31 and TOMM40; the interaction mediates its translocation to the mitochondria; the interaction with BCAP31 is direct (By similarity).</text>
</comment>
<comment type="subcellular location">
    <subcellularLocation>
        <location evidence="7">Mitochondrion inner membrane</location>
        <topology evidence="7">Peripheral membrane protein</topology>
        <orientation evidence="7">Matrix side</orientation>
    </subcellularLocation>
    <text evidence="2">The interaction with BCAP31 mediates mitochondria localization.</text>
</comment>
<comment type="disruption phenotype">
    <text evidence="3 5 6">Reduces the levels of assembled mitochondrial membrane respiratory chain NADH dehydrogenase (Complex I) and the rate of Complex I-driven oxygen consumption (PubMed:18396137, PubMed:25594180). Growth is retarded although activity and behavior are not affected during the first 4 weeks (PubMed:18396137). With aging, results in increasing lethargy, rapid deterioration of motor ability, weight loss followed by death (PubMed:18396137). Mitochondrial ultrastructure is normal, although large subsarcolemmal clusters of mitochondria are present in the soleus (PubMed:25594180). Exhibits glial lipid droplets accumulation in the olfactory bulb and vestibular nucleus prior to the onset of the physical signs of neurodegeneration (PubMed:25594180). Treatment with anti-oxidant treatment ameliorates the phenotype (PubMed:25594180). Conditional knockout in Vglut2-expressing glutamatergic neurons leads to decreased neuronal firing, brainstem inflammation, motor and respiratory deficits, and early death (PubMed:31403401). Conditional knockout in GABAergic neurons causes basal ganglia inflammation without motor or respiratory involvement, but accompanied by hypothermia and severe epileptic seizures preceding death (PubMed:31403401). Conditional knockout in cholinergic neurons has no effect on survival, body weight, or motor function (PubMed:31403401).</text>
</comment>
<comment type="similarity">
    <text evidence="8">Belongs to the complex I NDUFS4 subunit family.</text>
</comment>
<comment type="sequence caution" evidence="8">
    <conflict type="erroneous initiation">
        <sequence resource="EMBL-CDS" id="AAD30474"/>
    </conflict>
</comment>
<proteinExistence type="evidence at protein level"/>
<evidence type="ECO:0000250" key="1"/>
<evidence type="ECO:0000250" key="2">
    <source>
        <dbReference type="UniProtKB" id="O43181"/>
    </source>
</evidence>
<evidence type="ECO:0000269" key="3">
    <source>
    </source>
</evidence>
<evidence type="ECO:0000269" key="4">
    <source>
    </source>
</evidence>
<evidence type="ECO:0000269" key="5">
    <source>
    </source>
</evidence>
<evidence type="ECO:0000269" key="6">
    <source>
    </source>
</evidence>
<evidence type="ECO:0000269" key="7">
    <source>
    </source>
</evidence>
<evidence type="ECO:0000305" key="8"/>
<evidence type="ECO:0007744" key="9">
    <source>
        <dbReference type="PDB" id="8PW5"/>
    </source>
</evidence>
<evidence type="ECO:0007829" key="10">
    <source>
        <dbReference type="PDB" id="8OM1"/>
    </source>
</evidence>
<sequence length="175" mass="19785">MAAVSISVSLRQAMLGRRAMATAAVSVCRVPSRLLSTSTWKLADNQTRDTQLITVDEKLDITTLTGVPEEHIKTRKVRIFVPARNNMQSGVNNTKKWKMEFDTRERWENPLMGWASTADPLSNMVLTFSAKEDAIAFAEKNGWSYDVEEKKVPKPKSKSYGANFSWNKRTRVSTK</sequence>
<reference key="1">
    <citation type="journal article" date="2005" name="Science">
        <title>The transcriptional landscape of the mammalian genome.</title>
        <authorList>
            <person name="Carninci P."/>
            <person name="Kasukawa T."/>
            <person name="Katayama S."/>
            <person name="Gough J."/>
            <person name="Frith M.C."/>
            <person name="Maeda N."/>
            <person name="Oyama R."/>
            <person name="Ravasi T."/>
            <person name="Lenhard B."/>
            <person name="Wells C."/>
            <person name="Kodzius R."/>
            <person name="Shimokawa K."/>
            <person name="Bajic V.B."/>
            <person name="Brenner S.E."/>
            <person name="Batalov S."/>
            <person name="Forrest A.R."/>
            <person name="Zavolan M."/>
            <person name="Davis M.J."/>
            <person name="Wilming L.G."/>
            <person name="Aidinis V."/>
            <person name="Allen J.E."/>
            <person name="Ambesi-Impiombato A."/>
            <person name="Apweiler R."/>
            <person name="Aturaliya R.N."/>
            <person name="Bailey T.L."/>
            <person name="Bansal M."/>
            <person name="Baxter L."/>
            <person name="Beisel K.W."/>
            <person name="Bersano T."/>
            <person name="Bono H."/>
            <person name="Chalk A.M."/>
            <person name="Chiu K.P."/>
            <person name="Choudhary V."/>
            <person name="Christoffels A."/>
            <person name="Clutterbuck D.R."/>
            <person name="Crowe M.L."/>
            <person name="Dalla E."/>
            <person name="Dalrymple B.P."/>
            <person name="de Bono B."/>
            <person name="Della Gatta G."/>
            <person name="di Bernardo D."/>
            <person name="Down T."/>
            <person name="Engstrom P."/>
            <person name="Fagiolini M."/>
            <person name="Faulkner G."/>
            <person name="Fletcher C.F."/>
            <person name="Fukushima T."/>
            <person name="Furuno M."/>
            <person name="Futaki S."/>
            <person name="Gariboldi M."/>
            <person name="Georgii-Hemming P."/>
            <person name="Gingeras T.R."/>
            <person name="Gojobori T."/>
            <person name="Green R.E."/>
            <person name="Gustincich S."/>
            <person name="Harbers M."/>
            <person name="Hayashi Y."/>
            <person name="Hensch T.K."/>
            <person name="Hirokawa N."/>
            <person name="Hill D."/>
            <person name="Huminiecki L."/>
            <person name="Iacono M."/>
            <person name="Ikeo K."/>
            <person name="Iwama A."/>
            <person name="Ishikawa T."/>
            <person name="Jakt M."/>
            <person name="Kanapin A."/>
            <person name="Katoh M."/>
            <person name="Kawasawa Y."/>
            <person name="Kelso J."/>
            <person name="Kitamura H."/>
            <person name="Kitano H."/>
            <person name="Kollias G."/>
            <person name="Krishnan S.P."/>
            <person name="Kruger A."/>
            <person name="Kummerfeld S.K."/>
            <person name="Kurochkin I.V."/>
            <person name="Lareau L.F."/>
            <person name="Lazarevic D."/>
            <person name="Lipovich L."/>
            <person name="Liu J."/>
            <person name="Liuni S."/>
            <person name="McWilliam S."/>
            <person name="Madan Babu M."/>
            <person name="Madera M."/>
            <person name="Marchionni L."/>
            <person name="Matsuda H."/>
            <person name="Matsuzawa S."/>
            <person name="Miki H."/>
            <person name="Mignone F."/>
            <person name="Miyake S."/>
            <person name="Morris K."/>
            <person name="Mottagui-Tabar S."/>
            <person name="Mulder N."/>
            <person name="Nakano N."/>
            <person name="Nakauchi H."/>
            <person name="Ng P."/>
            <person name="Nilsson R."/>
            <person name="Nishiguchi S."/>
            <person name="Nishikawa S."/>
            <person name="Nori F."/>
            <person name="Ohara O."/>
            <person name="Okazaki Y."/>
            <person name="Orlando V."/>
            <person name="Pang K.C."/>
            <person name="Pavan W.J."/>
            <person name="Pavesi G."/>
            <person name="Pesole G."/>
            <person name="Petrovsky N."/>
            <person name="Piazza S."/>
            <person name="Reed J."/>
            <person name="Reid J.F."/>
            <person name="Ring B.Z."/>
            <person name="Ringwald M."/>
            <person name="Rost B."/>
            <person name="Ruan Y."/>
            <person name="Salzberg S.L."/>
            <person name="Sandelin A."/>
            <person name="Schneider C."/>
            <person name="Schoenbach C."/>
            <person name="Sekiguchi K."/>
            <person name="Semple C.A."/>
            <person name="Seno S."/>
            <person name="Sessa L."/>
            <person name="Sheng Y."/>
            <person name="Shibata Y."/>
            <person name="Shimada H."/>
            <person name="Shimada K."/>
            <person name="Silva D."/>
            <person name="Sinclair B."/>
            <person name="Sperling S."/>
            <person name="Stupka E."/>
            <person name="Sugiura K."/>
            <person name="Sultana R."/>
            <person name="Takenaka Y."/>
            <person name="Taki K."/>
            <person name="Tammoja K."/>
            <person name="Tan S.L."/>
            <person name="Tang S."/>
            <person name="Taylor M.S."/>
            <person name="Tegner J."/>
            <person name="Teichmann S.A."/>
            <person name="Ueda H.R."/>
            <person name="van Nimwegen E."/>
            <person name="Verardo R."/>
            <person name="Wei C.L."/>
            <person name="Yagi K."/>
            <person name="Yamanishi H."/>
            <person name="Zabarovsky E."/>
            <person name="Zhu S."/>
            <person name="Zimmer A."/>
            <person name="Hide W."/>
            <person name="Bult C."/>
            <person name="Grimmond S.M."/>
            <person name="Teasdale R.D."/>
            <person name="Liu E.T."/>
            <person name="Brusic V."/>
            <person name="Quackenbush J."/>
            <person name="Wahlestedt C."/>
            <person name="Mattick J.S."/>
            <person name="Hume D.A."/>
            <person name="Kai C."/>
            <person name="Sasaki D."/>
            <person name="Tomaru Y."/>
            <person name="Fukuda S."/>
            <person name="Kanamori-Katayama M."/>
            <person name="Suzuki M."/>
            <person name="Aoki J."/>
            <person name="Arakawa T."/>
            <person name="Iida J."/>
            <person name="Imamura K."/>
            <person name="Itoh M."/>
            <person name="Kato T."/>
            <person name="Kawaji H."/>
            <person name="Kawagashira N."/>
            <person name="Kawashima T."/>
            <person name="Kojima M."/>
            <person name="Kondo S."/>
            <person name="Konno H."/>
            <person name="Nakano K."/>
            <person name="Ninomiya N."/>
            <person name="Nishio T."/>
            <person name="Okada M."/>
            <person name="Plessy C."/>
            <person name="Shibata K."/>
            <person name="Shiraki T."/>
            <person name="Suzuki S."/>
            <person name="Tagami M."/>
            <person name="Waki K."/>
            <person name="Watahiki A."/>
            <person name="Okamura-Oho Y."/>
            <person name="Suzuki H."/>
            <person name="Kawai J."/>
            <person name="Hayashizaki Y."/>
        </authorList>
    </citation>
    <scope>NUCLEOTIDE SEQUENCE [LARGE SCALE MRNA]</scope>
    <source>
        <strain>C57BL/6J</strain>
        <tissue>Liver</tissue>
    </source>
</reference>
<reference key="2">
    <citation type="journal article" date="1999" name="J. Biol. Chem.">
        <title>Up-regulation of nuclear and mitochondrial genes in the skeletal muscle of mice lacking the heart/muscle isoform of the adenine nucleotide translocator.</title>
        <authorList>
            <person name="Murdock D.G."/>
            <person name="Boone B.E."/>
            <person name="Esposito L.A."/>
            <person name="Wallace D.C."/>
        </authorList>
    </citation>
    <scope>NUCLEOTIDE SEQUENCE [MRNA] OF 7-175</scope>
    <source>
        <strain>BALB/cJ</strain>
        <tissue>Skeletal muscle</tissue>
    </source>
</reference>
<reference key="3">
    <citation type="submission" date="2007-04" db="UniProtKB">
        <authorList>
            <person name="Lubec G."/>
            <person name="Kang S.U."/>
        </authorList>
    </citation>
    <scope>PROTEIN SEQUENCE OF 49-73; 132-150 AND 159-168</scope>
    <scope>IDENTIFICATION BY MASS SPECTROMETRY</scope>
    <source>
        <strain>C57BL/6J</strain>
        <tissue>Brain</tissue>
    </source>
</reference>
<reference key="4">
    <citation type="journal article" date="2008" name="Cell Metab.">
        <title>Mice with mitochondrial complex I deficiency develop a fatal encephalomyopathy.</title>
        <authorList>
            <person name="Kruse S.E."/>
            <person name="Watt W.C."/>
            <person name="Marcinek D.J."/>
            <person name="Kapur R.P."/>
            <person name="Schenkman K.A."/>
            <person name="Palmiter R.D."/>
        </authorList>
    </citation>
    <scope>DISRUPTION PHENOTYPE</scope>
</reference>
<reference key="5">
    <citation type="journal article" date="2010" name="Cell">
        <title>A tissue-specific atlas of mouse protein phosphorylation and expression.</title>
        <authorList>
            <person name="Huttlin E.L."/>
            <person name="Jedrychowski M.P."/>
            <person name="Elias J.E."/>
            <person name="Goswami T."/>
            <person name="Rad R."/>
            <person name="Beausoleil S.A."/>
            <person name="Villen J."/>
            <person name="Haas W."/>
            <person name="Sowa M.E."/>
            <person name="Gygi S.P."/>
        </authorList>
    </citation>
    <scope>IDENTIFICATION BY MASS SPECTROMETRY [LARGE SCALE ANALYSIS]</scope>
    <source>
        <tissue>Brain</tissue>
        <tissue>Brown adipose tissue</tissue>
        <tissue>Heart</tissue>
        <tissue>Kidney</tissue>
        <tissue>Liver</tissue>
        <tissue>Lung</tissue>
        <tissue>Pancreas</tissue>
        <tissue>Spleen</tissue>
        <tissue>Testis</tissue>
    </source>
</reference>
<reference key="6">
    <citation type="journal article" date="2010" name="Mitochondrion">
        <title>Phosphorylation pattern of the NDUFS4 subunit of complex I of the mammalian respiratory chain.</title>
        <authorList>
            <person name="De Rasmo D."/>
            <person name="Palmisano G."/>
            <person name="Scacco S."/>
            <person name="Technikova-Dobrova Z."/>
            <person name="Panelli D."/>
            <person name="Cocco T."/>
            <person name="Sardanelli A.M."/>
            <person name="Gnoni A."/>
            <person name="Micelli L."/>
            <person name="Trani A."/>
            <person name="Di Luccia A."/>
            <person name="Papa S."/>
        </authorList>
    </citation>
    <scope>PHOSPHORYLATION AT SER-173</scope>
</reference>
<reference key="7">
    <citation type="journal article" date="2015" name="Cell">
        <title>Glial lipid droplets and ROS induced by mitochondrial defects promote neurodegeneration.</title>
        <authorList>
            <person name="Liu L."/>
            <person name="Zhang K."/>
            <person name="Sandoval H."/>
            <person name="Yamamoto S."/>
            <person name="Jaiswal M."/>
            <person name="Sanz E."/>
            <person name="Li Z."/>
            <person name="Hui J."/>
            <person name="Graham B.H."/>
            <person name="Quintana A."/>
            <person name="Bellen H.J."/>
        </authorList>
    </citation>
    <scope>DISRUPTION PHENOTYPE</scope>
</reference>
<reference key="8">
    <citation type="journal article" date="2019" name="Elife">
        <title>Defined neuronal populations drive fatal phenotype in a mouse model of Leigh syndrome.</title>
        <authorList>
            <person name="Bolea I."/>
            <person name="Gella A."/>
            <person name="Sanz E."/>
            <person name="Prada-Dacasa P."/>
            <person name="Menardy F."/>
            <person name="Bard A.M."/>
            <person name="Machuca-Marquez P."/>
            <person name="Eraso-Pichot A."/>
            <person name="Modol-Caballero G."/>
            <person name="Navarro X."/>
            <person name="Kalume F."/>
            <person name="Quintana A."/>
        </authorList>
    </citation>
    <scope>DISRUPTION PHENOTYPE</scope>
</reference>
<reference evidence="9" key="9">
    <citation type="journal article" date="2024" name="Nat. Struct. Mol. Biol.">
        <title>SCAF1 drives the compositional diversity of mammalian respirasomes.</title>
        <authorList>
            <person name="Vercellino I."/>
            <person name="Sazanov L.A."/>
        </authorList>
    </citation>
    <scope>STRUCTURE BY ELECTRON MICROSCOPY (3.60 ANGSTROMS) IN COMPLEX WITH MITOCHONDRIAL RESPIRATORY SUPERCOMPLEX</scope>
    <scope>FUNCTION</scope>
    <scope>SUBCELLULAR LOCATION</scope>
    <scope>SUBUNIT</scope>
</reference>
<accession>Q9CXZ1</accession>
<accession>Q9WUB1</accession>
<protein>
    <recommendedName>
        <fullName>NADH dehydrogenase [ubiquinone] iron-sulfur protein 4, mitochondrial</fullName>
    </recommendedName>
    <alternativeName>
        <fullName>Complex I-18 kDa</fullName>
        <shortName>CI-18 kDa</shortName>
    </alternativeName>
    <alternativeName>
        <fullName>Complex I-AQDQ</fullName>
        <shortName>CI-AQDQ</shortName>
    </alternativeName>
    <alternativeName>
        <fullName>NADH-ubiquinone oxidoreductase 18 kDa subunit</fullName>
    </alternativeName>
</protein>
<dbReference type="EMBL" id="AK011124">
    <property type="protein sequence ID" value="BAB27417.2"/>
    <property type="molecule type" value="mRNA"/>
</dbReference>
<dbReference type="EMBL" id="AF124785">
    <property type="protein sequence ID" value="AAD30474.1"/>
    <property type="status" value="ALT_INIT"/>
    <property type="molecule type" value="mRNA"/>
</dbReference>
<dbReference type="CCDS" id="CCDS49368.1"/>
<dbReference type="RefSeq" id="NP_035017.2">
    <property type="nucleotide sequence ID" value="NM_010887.2"/>
</dbReference>
<dbReference type="PDB" id="6G2J">
    <property type="method" value="EM"/>
    <property type="resolution" value="3.30 A"/>
    <property type="chains" value="Q=1-175"/>
</dbReference>
<dbReference type="PDB" id="6G72">
    <property type="method" value="EM"/>
    <property type="resolution" value="3.90 A"/>
    <property type="chains" value="Q=1-175"/>
</dbReference>
<dbReference type="PDB" id="6ZR2">
    <property type="method" value="EM"/>
    <property type="resolution" value="3.10 A"/>
    <property type="chains" value="Q=1-175"/>
</dbReference>
<dbReference type="PDB" id="6ZTQ">
    <property type="method" value="EM"/>
    <property type="resolution" value="3.00 A"/>
    <property type="chains" value="Q=1-175"/>
</dbReference>
<dbReference type="PDB" id="7AK5">
    <property type="method" value="EM"/>
    <property type="resolution" value="3.17 A"/>
    <property type="chains" value="Q=1-175"/>
</dbReference>
<dbReference type="PDB" id="7AK6">
    <property type="method" value="EM"/>
    <property type="resolution" value="3.82 A"/>
    <property type="chains" value="Q=1-175"/>
</dbReference>
<dbReference type="PDB" id="7B93">
    <property type="method" value="EM"/>
    <property type="resolution" value="3.04 A"/>
    <property type="chains" value="Q=1-175"/>
</dbReference>
<dbReference type="PDB" id="7PSA">
    <property type="method" value="EM"/>
    <property type="resolution" value="3.40 A"/>
    <property type="chains" value="Q=1-175"/>
</dbReference>
<dbReference type="PDB" id="8IAO">
    <property type="method" value="EM"/>
    <property type="resolution" value="4.20 A"/>
    <property type="chains" value="Q=1-175"/>
</dbReference>
<dbReference type="PDB" id="8IAP">
    <property type="method" value="EM"/>
    <property type="resolution" value="3.20 A"/>
    <property type="chains" value="Q=1-175"/>
</dbReference>
<dbReference type="PDB" id="8IB4">
    <property type="method" value="EM"/>
    <property type="resolution" value="4.30 A"/>
    <property type="chains" value="Q=1-175"/>
</dbReference>
<dbReference type="PDB" id="8IB5">
    <property type="method" value="EM"/>
    <property type="resolution" value="3.30 A"/>
    <property type="chains" value="Q=1-175"/>
</dbReference>
<dbReference type="PDB" id="8IB9">
    <property type="method" value="EM"/>
    <property type="resolution" value="4.30 A"/>
    <property type="chains" value="Q=1-175"/>
</dbReference>
<dbReference type="PDB" id="8IBA">
    <property type="method" value="EM"/>
    <property type="resolution" value="3.20 A"/>
    <property type="chains" value="Q=1-175"/>
</dbReference>
<dbReference type="PDB" id="8IBD">
    <property type="method" value="EM"/>
    <property type="resolution" value="4.20 A"/>
    <property type="chains" value="Q=1-175"/>
</dbReference>
<dbReference type="PDB" id="8IBE">
    <property type="method" value="EM"/>
    <property type="resolution" value="3.30 A"/>
    <property type="chains" value="Q=1-175"/>
</dbReference>
<dbReference type="PDB" id="8IC2">
    <property type="method" value="EM"/>
    <property type="resolution" value="6.30 A"/>
    <property type="chains" value="Q=1-175"/>
</dbReference>
<dbReference type="PDB" id="8IC3">
    <property type="method" value="EM"/>
    <property type="resolution" value="3.20 A"/>
    <property type="chains" value="Q=1-175"/>
</dbReference>
<dbReference type="PDB" id="8OLT">
    <property type="method" value="EM"/>
    <property type="resolution" value="2.84 A"/>
    <property type="chains" value="Q=1-175"/>
</dbReference>
<dbReference type="PDB" id="8OM1">
    <property type="method" value="EM"/>
    <property type="resolution" value="2.39 A"/>
    <property type="chains" value="Q=1-175"/>
</dbReference>
<dbReference type="PDB" id="8PW5">
    <property type="method" value="EM"/>
    <property type="resolution" value="3.60 A"/>
    <property type="chains" value="Q1=1-175"/>
</dbReference>
<dbReference type="PDB" id="8PW6">
    <property type="method" value="EM"/>
    <property type="resolution" value="3.30 A"/>
    <property type="chains" value="Q1=1-175"/>
</dbReference>
<dbReference type="PDB" id="8PW7">
    <property type="method" value="EM"/>
    <property type="resolution" value="3.50 A"/>
    <property type="chains" value="Q1=1-175"/>
</dbReference>
<dbReference type="PDB" id="8RGP">
    <property type="method" value="EM"/>
    <property type="resolution" value="3.00 A"/>
    <property type="chains" value="Q=1-175"/>
</dbReference>
<dbReference type="PDB" id="8RGQ">
    <property type="method" value="EM"/>
    <property type="resolution" value="3.00 A"/>
    <property type="chains" value="Q=1-175"/>
</dbReference>
<dbReference type="PDB" id="8RGR">
    <property type="method" value="EM"/>
    <property type="resolution" value="2.90 A"/>
    <property type="chains" value="Q=1-175"/>
</dbReference>
<dbReference type="PDB" id="8RGT">
    <property type="method" value="EM"/>
    <property type="resolution" value="3.10 A"/>
    <property type="chains" value="Q=1-175"/>
</dbReference>
<dbReference type="PDB" id="8UCA">
    <property type="method" value="EM"/>
    <property type="resolution" value="3.70 A"/>
    <property type="chains" value="S4/s4=1-175"/>
</dbReference>
<dbReference type="PDB" id="8XNL">
    <property type="method" value="EM"/>
    <property type="resolution" value="3.10 A"/>
    <property type="chains" value="Q=1-175"/>
</dbReference>
<dbReference type="PDB" id="8XNM">
    <property type="method" value="EM"/>
    <property type="resolution" value="3.50 A"/>
    <property type="chains" value="Q=1-175"/>
</dbReference>
<dbReference type="PDB" id="8XNN">
    <property type="method" value="EM"/>
    <property type="resolution" value="3.60 A"/>
    <property type="chains" value="Q=1-175"/>
</dbReference>
<dbReference type="PDB" id="8XNO">
    <property type="method" value="EM"/>
    <property type="resolution" value="3.40 A"/>
    <property type="chains" value="Q=1-175"/>
</dbReference>
<dbReference type="PDB" id="8XNP">
    <property type="method" value="EM"/>
    <property type="resolution" value="3.50 A"/>
    <property type="chains" value="Q=1-175"/>
</dbReference>
<dbReference type="PDB" id="8XNQ">
    <property type="method" value="EM"/>
    <property type="resolution" value="3.70 A"/>
    <property type="chains" value="Q=1-175"/>
</dbReference>
<dbReference type="PDB" id="8XNR">
    <property type="method" value="EM"/>
    <property type="resolution" value="3.30 A"/>
    <property type="chains" value="Q=1-175"/>
</dbReference>
<dbReference type="PDB" id="8XNS">
    <property type="method" value="EM"/>
    <property type="resolution" value="3.50 A"/>
    <property type="chains" value="Q=1-175"/>
</dbReference>
<dbReference type="PDB" id="8XNT">
    <property type="method" value="EM"/>
    <property type="resolution" value="4.10 A"/>
    <property type="chains" value="Q=1-175"/>
</dbReference>
<dbReference type="PDB" id="8XNU">
    <property type="method" value="EM"/>
    <property type="resolution" value="3.60 A"/>
    <property type="chains" value="Q=1-175"/>
</dbReference>
<dbReference type="PDB" id="8XNV">
    <property type="method" value="EM"/>
    <property type="resolution" value="3.30 A"/>
    <property type="chains" value="Q=1-175"/>
</dbReference>
<dbReference type="PDB" id="8XNW">
    <property type="method" value="EM"/>
    <property type="resolution" value="3.60 A"/>
    <property type="chains" value="Q=1-175"/>
</dbReference>
<dbReference type="PDB" id="8XNX">
    <property type="method" value="EM"/>
    <property type="resolution" value="3.50 A"/>
    <property type="chains" value="Q=1-175"/>
</dbReference>
<dbReference type="PDB" id="8XNY">
    <property type="method" value="EM"/>
    <property type="resolution" value="4.10 A"/>
    <property type="chains" value="Q=1-175"/>
</dbReference>
<dbReference type="PDB" id="8XNZ">
    <property type="method" value="EM"/>
    <property type="resolution" value="3.30 A"/>
    <property type="chains" value="Q=1-175"/>
</dbReference>
<dbReference type="PDB" id="8XO0">
    <property type="method" value="EM"/>
    <property type="resolution" value="4.20 A"/>
    <property type="chains" value="Q=1-175"/>
</dbReference>
<dbReference type="PDBsum" id="6G2J"/>
<dbReference type="PDBsum" id="6G72"/>
<dbReference type="PDBsum" id="6ZR2"/>
<dbReference type="PDBsum" id="6ZTQ"/>
<dbReference type="PDBsum" id="7AK5"/>
<dbReference type="PDBsum" id="7AK6"/>
<dbReference type="PDBsum" id="7B93"/>
<dbReference type="PDBsum" id="7PSA"/>
<dbReference type="PDBsum" id="8IAO"/>
<dbReference type="PDBsum" id="8IAP"/>
<dbReference type="PDBsum" id="8IB4"/>
<dbReference type="PDBsum" id="8IB5"/>
<dbReference type="PDBsum" id="8IB9"/>
<dbReference type="PDBsum" id="8IBA"/>
<dbReference type="PDBsum" id="8IBD"/>
<dbReference type="PDBsum" id="8IBE"/>
<dbReference type="PDBsum" id="8IC2"/>
<dbReference type="PDBsum" id="8IC3"/>
<dbReference type="PDBsum" id="8OLT"/>
<dbReference type="PDBsum" id="8OM1"/>
<dbReference type="PDBsum" id="8PW5"/>
<dbReference type="PDBsum" id="8PW6"/>
<dbReference type="PDBsum" id="8PW7"/>
<dbReference type="PDBsum" id="8RGP"/>
<dbReference type="PDBsum" id="8RGQ"/>
<dbReference type="PDBsum" id="8RGR"/>
<dbReference type="PDBsum" id="8RGT"/>
<dbReference type="PDBsum" id="8UCA"/>
<dbReference type="PDBsum" id="8XNL"/>
<dbReference type="PDBsum" id="8XNM"/>
<dbReference type="PDBsum" id="8XNN"/>
<dbReference type="PDBsum" id="8XNO"/>
<dbReference type="PDBsum" id="8XNP"/>
<dbReference type="PDBsum" id="8XNQ"/>
<dbReference type="PDBsum" id="8XNR"/>
<dbReference type="PDBsum" id="8XNS"/>
<dbReference type="PDBsum" id="8XNT"/>
<dbReference type="PDBsum" id="8XNU"/>
<dbReference type="PDBsum" id="8XNV"/>
<dbReference type="PDBsum" id="8XNW"/>
<dbReference type="PDBsum" id="8XNX"/>
<dbReference type="PDBsum" id="8XNY"/>
<dbReference type="PDBsum" id="8XNZ"/>
<dbReference type="PDBsum" id="8XO0"/>
<dbReference type="EMDB" id="EMD-11377"/>
<dbReference type="EMDB" id="EMD-11424"/>
<dbReference type="EMDB" id="EMD-11810"/>
<dbReference type="EMDB" id="EMD-11811"/>
<dbReference type="EMDB" id="EMD-12095"/>
<dbReference type="EMDB" id="EMD-13611"/>
<dbReference type="EMDB" id="EMD-16962"/>
<dbReference type="EMDB" id="EMD-16965"/>
<dbReference type="EMDB" id="EMD-17989"/>
<dbReference type="EMDB" id="EMD-17990"/>
<dbReference type="EMDB" id="EMD-17991"/>
<dbReference type="EMDB" id="EMD-19145"/>
<dbReference type="EMDB" id="EMD-19146"/>
<dbReference type="EMDB" id="EMD-19147"/>
<dbReference type="EMDB" id="EMD-19148"/>
<dbReference type="EMDB" id="EMD-35313"/>
<dbReference type="EMDB" id="EMD-35314"/>
<dbReference type="EMDB" id="EMD-35331"/>
<dbReference type="EMDB" id="EMD-35332"/>
<dbReference type="EMDB" id="EMD-35336"/>
<dbReference type="EMDB" id="EMD-35337"/>
<dbReference type="EMDB" id="EMD-35340"/>
<dbReference type="EMDB" id="EMD-35341"/>
<dbReference type="EMDB" id="EMD-35352"/>
<dbReference type="EMDB" id="EMD-35353"/>
<dbReference type="EMDB" id="EMD-38506"/>
<dbReference type="EMDB" id="EMD-38507"/>
<dbReference type="EMDB" id="EMD-38508"/>
<dbReference type="EMDB" id="EMD-38509"/>
<dbReference type="EMDB" id="EMD-38510"/>
<dbReference type="EMDB" id="EMD-38511"/>
<dbReference type="EMDB" id="EMD-38512"/>
<dbReference type="EMDB" id="EMD-38513"/>
<dbReference type="EMDB" id="EMD-38514"/>
<dbReference type="EMDB" id="EMD-38515"/>
<dbReference type="EMDB" id="EMD-38516"/>
<dbReference type="EMDB" id="EMD-38517"/>
<dbReference type="EMDB" id="EMD-38518"/>
<dbReference type="EMDB" id="EMD-38519"/>
<dbReference type="EMDB" id="EMD-38520"/>
<dbReference type="EMDB" id="EMD-38521"/>
<dbReference type="EMDB" id="EMD-42122"/>
<dbReference type="EMDB" id="EMD-4345"/>
<dbReference type="EMDB" id="EMD-4356"/>
<dbReference type="SMR" id="Q9CXZ1"/>
<dbReference type="BioGRID" id="201718">
    <property type="interactions" value="55"/>
</dbReference>
<dbReference type="ComplexPortal" id="CPX-266">
    <property type="entry name" value="Mitochondrial respiratory chain complex I"/>
</dbReference>
<dbReference type="CORUM" id="Q9CXZ1"/>
<dbReference type="FunCoup" id="Q9CXZ1">
    <property type="interactions" value="1995"/>
</dbReference>
<dbReference type="IntAct" id="Q9CXZ1">
    <property type="interactions" value="6"/>
</dbReference>
<dbReference type="MINT" id="Q9CXZ1"/>
<dbReference type="STRING" id="10090.ENSMUSP00000022286"/>
<dbReference type="GlyGen" id="Q9CXZ1">
    <property type="glycosylation" value="2 sites, 1 N-linked glycan (1 site), 1 O-linked glycan (1 site)"/>
</dbReference>
<dbReference type="iPTMnet" id="Q9CXZ1"/>
<dbReference type="PhosphoSitePlus" id="Q9CXZ1"/>
<dbReference type="SwissPalm" id="Q9CXZ1"/>
<dbReference type="jPOST" id="Q9CXZ1"/>
<dbReference type="PaxDb" id="10090-ENSMUSP00000022286"/>
<dbReference type="PeptideAtlas" id="Q9CXZ1"/>
<dbReference type="ProteomicsDB" id="253048"/>
<dbReference type="Pumba" id="Q9CXZ1"/>
<dbReference type="DNASU" id="17993"/>
<dbReference type="GeneID" id="17993"/>
<dbReference type="KEGG" id="mmu:17993"/>
<dbReference type="AGR" id="MGI:1343135"/>
<dbReference type="CTD" id="4724"/>
<dbReference type="MGI" id="MGI:1343135">
    <property type="gene designation" value="Ndufs4"/>
</dbReference>
<dbReference type="eggNOG" id="KOG3389">
    <property type="taxonomic scope" value="Eukaryota"/>
</dbReference>
<dbReference type="InParanoid" id="Q9CXZ1"/>
<dbReference type="OrthoDB" id="3089at2759"/>
<dbReference type="PhylomeDB" id="Q9CXZ1"/>
<dbReference type="Reactome" id="R-MMU-611105">
    <property type="pathway name" value="Respiratory electron transport"/>
</dbReference>
<dbReference type="Reactome" id="R-MMU-6799198">
    <property type="pathway name" value="Complex I biogenesis"/>
</dbReference>
<dbReference type="BioGRID-ORCS" id="17993">
    <property type="hits" value="6 hits in 79 CRISPR screens"/>
</dbReference>
<dbReference type="ChiTaRS" id="Ndufs4">
    <property type="organism name" value="mouse"/>
</dbReference>
<dbReference type="PRO" id="PR:Q9CXZ1"/>
<dbReference type="Proteomes" id="UP000000589">
    <property type="component" value="Unplaced"/>
</dbReference>
<dbReference type="RNAct" id="Q9CXZ1">
    <property type="molecule type" value="protein"/>
</dbReference>
<dbReference type="GO" id="GO:0005743">
    <property type="term" value="C:mitochondrial inner membrane"/>
    <property type="evidence" value="ECO:0000314"/>
    <property type="project" value="UniProtKB"/>
</dbReference>
<dbReference type="GO" id="GO:0005739">
    <property type="term" value="C:mitochondrion"/>
    <property type="evidence" value="ECO:0000314"/>
    <property type="project" value="MGI"/>
</dbReference>
<dbReference type="GO" id="GO:0045271">
    <property type="term" value="C:respiratory chain complex I"/>
    <property type="evidence" value="ECO:0000314"/>
    <property type="project" value="UniProtKB"/>
</dbReference>
<dbReference type="GO" id="GO:0008137">
    <property type="term" value="F:NADH dehydrogenase (ubiquinone) activity"/>
    <property type="evidence" value="ECO:0000314"/>
    <property type="project" value="MGI"/>
</dbReference>
<dbReference type="GO" id="GO:0030534">
    <property type="term" value="P:adult behavior"/>
    <property type="evidence" value="ECO:0000315"/>
    <property type="project" value="MGI"/>
</dbReference>
<dbReference type="GO" id="GO:0007628">
    <property type="term" value="P:adult walking behavior"/>
    <property type="evidence" value="ECO:0000315"/>
    <property type="project" value="MGI"/>
</dbReference>
<dbReference type="GO" id="GO:0009060">
    <property type="term" value="P:aerobic respiration"/>
    <property type="evidence" value="ECO:0000303"/>
    <property type="project" value="ComplexPortal"/>
</dbReference>
<dbReference type="GO" id="GO:0007420">
    <property type="term" value="P:brain development"/>
    <property type="evidence" value="ECO:0000315"/>
    <property type="project" value="MGI"/>
</dbReference>
<dbReference type="GO" id="GO:0071453">
    <property type="term" value="P:cellular response to oxygen levels"/>
    <property type="evidence" value="ECO:0000315"/>
    <property type="project" value="MGI"/>
</dbReference>
<dbReference type="GO" id="GO:0050890">
    <property type="term" value="P:cognition"/>
    <property type="evidence" value="ECO:0000315"/>
    <property type="project" value="MGI"/>
</dbReference>
<dbReference type="GO" id="GO:0042417">
    <property type="term" value="P:dopamine metabolic process"/>
    <property type="evidence" value="ECO:0000315"/>
    <property type="project" value="MGI"/>
</dbReference>
<dbReference type="GO" id="GO:0006954">
    <property type="term" value="P:inflammatory response"/>
    <property type="evidence" value="ECO:0000315"/>
    <property type="project" value="MGI"/>
</dbReference>
<dbReference type="GO" id="GO:0045087">
    <property type="term" value="P:innate immune response"/>
    <property type="evidence" value="ECO:0000315"/>
    <property type="project" value="MGI"/>
</dbReference>
<dbReference type="GO" id="GO:0032981">
    <property type="term" value="P:mitochondrial respiratory chain complex I assembly"/>
    <property type="evidence" value="ECO:0000315"/>
    <property type="project" value="MGI"/>
</dbReference>
<dbReference type="GO" id="GO:0051402">
    <property type="term" value="P:neuron apoptotic process"/>
    <property type="evidence" value="ECO:0000315"/>
    <property type="project" value="MGI"/>
</dbReference>
<dbReference type="GO" id="GO:0048666">
    <property type="term" value="P:neuron development"/>
    <property type="evidence" value="ECO:0000315"/>
    <property type="project" value="MGI"/>
</dbReference>
<dbReference type="GO" id="GO:0042776">
    <property type="term" value="P:proton motive force-driven mitochondrial ATP synthesis"/>
    <property type="evidence" value="ECO:0000303"/>
    <property type="project" value="ComplexPortal"/>
</dbReference>
<dbReference type="GO" id="GO:0036343">
    <property type="term" value="P:psychomotor behavior"/>
    <property type="evidence" value="ECO:0000315"/>
    <property type="project" value="MGI"/>
</dbReference>
<dbReference type="GO" id="GO:0072593">
    <property type="term" value="P:reactive oxygen species metabolic process"/>
    <property type="evidence" value="ECO:0000315"/>
    <property type="project" value="MGI"/>
</dbReference>
<dbReference type="GO" id="GO:0051881">
    <property type="term" value="P:regulation of mitochondrial membrane potential"/>
    <property type="evidence" value="ECO:0000315"/>
    <property type="project" value="MGI"/>
</dbReference>
<dbReference type="GO" id="GO:0022904">
    <property type="term" value="P:respiratory electron transport chain"/>
    <property type="evidence" value="ECO:0000315"/>
    <property type="project" value="MGI"/>
</dbReference>
<dbReference type="GO" id="GO:0003016">
    <property type="term" value="P:respiratory system process"/>
    <property type="evidence" value="ECO:0000315"/>
    <property type="project" value="MGI"/>
</dbReference>
<dbReference type="GO" id="GO:0014876">
    <property type="term" value="P:response to injury involved in regulation of muscle adaptation"/>
    <property type="evidence" value="ECO:0000315"/>
    <property type="project" value="MGI"/>
</dbReference>
<dbReference type="GO" id="GO:0007605">
    <property type="term" value="P:sensory perception of sound"/>
    <property type="evidence" value="ECO:0000315"/>
    <property type="project" value="MGI"/>
</dbReference>
<dbReference type="GO" id="GO:0006099">
    <property type="term" value="P:tricarboxylic acid cycle"/>
    <property type="evidence" value="ECO:0000304"/>
    <property type="project" value="MGI"/>
</dbReference>
<dbReference type="GO" id="GO:0007601">
    <property type="term" value="P:visual perception"/>
    <property type="evidence" value="ECO:0000315"/>
    <property type="project" value="MGI"/>
</dbReference>
<dbReference type="FunFam" id="3.30.160.190:FF:000001">
    <property type="entry name" value="NADH-ubiquinone oxidoreductase 21 kDa subunit mitochondrial"/>
    <property type="match status" value="1"/>
</dbReference>
<dbReference type="Gene3D" id="3.30.160.190">
    <property type="entry name" value="atu1810 like domain"/>
    <property type="match status" value="1"/>
</dbReference>
<dbReference type="InterPro" id="IPR006885">
    <property type="entry name" value="NADH_UbQ_FeS_4_mit-like"/>
</dbReference>
<dbReference type="InterPro" id="IPR038532">
    <property type="entry name" value="NDUFS4-like_sf"/>
</dbReference>
<dbReference type="PANTHER" id="PTHR12219:SF28">
    <property type="entry name" value="NADH DEHYDROGENASE [UBIQUINONE] IRON-SULFUR PROTEIN 4, MITOCHONDRIAL"/>
    <property type="match status" value="1"/>
</dbReference>
<dbReference type="PANTHER" id="PTHR12219">
    <property type="entry name" value="NADH-UBIQUINONE OXIDOREDUCTASE"/>
    <property type="match status" value="1"/>
</dbReference>
<dbReference type="Pfam" id="PF04800">
    <property type="entry name" value="NDUS4"/>
    <property type="match status" value="1"/>
</dbReference>
<organism>
    <name type="scientific">Mus musculus</name>
    <name type="common">Mouse</name>
    <dbReference type="NCBI Taxonomy" id="10090"/>
    <lineage>
        <taxon>Eukaryota</taxon>
        <taxon>Metazoa</taxon>
        <taxon>Chordata</taxon>
        <taxon>Craniata</taxon>
        <taxon>Vertebrata</taxon>
        <taxon>Euteleostomi</taxon>
        <taxon>Mammalia</taxon>
        <taxon>Eutheria</taxon>
        <taxon>Euarchontoglires</taxon>
        <taxon>Glires</taxon>
        <taxon>Rodentia</taxon>
        <taxon>Myomorpha</taxon>
        <taxon>Muroidea</taxon>
        <taxon>Muridae</taxon>
        <taxon>Murinae</taxon>
        <taxon>Mus</taxon>
        <taxon>Mus</taxon>
    </lineage>
</organism>
<feature type="transit peptide" description="Mitochondrion" evidence="1">
    <location>
        <begin position="1"/>
        <end position="42"/>
    </location>
</feature>
<feature type="chain" id="PRO_0000020039" description="NADH dehydrogenase [ubiquinone] iron-sulfur protein 4, mitochondrial">
    <location>
        <begin position="43"/>
        <end position="175"/>
    </location>
</feature>
<feature type="modified residue" description="Phosphoserine" evidence="4">
    <location>
        <position position="173"/>
    </location>
</feature>
<feature type="sequence conflict" description="In Ref. 1; BAB27417." evidence="8" ref="1">
    <original>P</original>
    <variation>Q</variation>
    <location>
        <position position="68"/>
    </location>
</feature>
<feature type="helix" evidence="10">
    <location>
        <begin position="62"/>
        <end position="64"/>
    </location>
</feature>
<feature type="helix" evidence="10">
    <location>
        <begin position="70"/>
        <end position="73"/>
    </location>
</feature>
<feature type="strand" evidence="10">
    <location>
        <begin position="76"/>
        <end position="80"/>
    </location>
</feature>
<feature type="strand" evidence="10">
    <location>
        <begin position="94"/>
        <end position="101"/>
    </location>
</feature>
<feature type="strand" evidence="10">
    <location>
        <begin position="106"/>
        <end position="108"/>
    </location>
</feature>
<feature type="turn" evidence="10">
    <location>
        <begin position="110"/>
        <end position="112"/>
    </location>
</feature>
<feature type="strand" evidence="10">
    <location>
        <begin position="115"/>
        <end position="117"/>
    </location>
</feature>
<feature type="turn" evidence="10">
    <location>
        <begin position="120"/>
        <end position="123"/>
    </location>
</feature>
<feature type="strand" evidence="10">
    <location>
        <begin position="125"/>
        <end position="130"/>
    </location>
</feature>
<feature type="helix" evidence="10">
    <location>
        <begin position="131"/>
        <end position="140"/>
    </location>
</feature>
<feature type="strand" evidence="10">
    <location>
        <begin position="144"/>
        <end position="147"/>
    </location>
</feature>
<feature type="helix" evidence="10">
    <location>
        <begin position="160"/>
        <end position="164"/>
    </location>
</feature>
<feature type="strand" evidence="10">
    <location>
        <begin position="166"/>
        <end position="168"/>
    </location>
</feature>